<accession>B6EGC1</accession>
<feature type="chain" id="PRO_1000130126" description="tRNA (guanine-N(1)-)-methyltransferase">
    <location>
        <begin position="1"/>
        <end position="249"/>
    </location>
</feature>
<feature type="binding site" evidence="1">
    <location>
        <position position="113"/>
    </location>
    <ligand>
        <name>S-adenosyl-L-methionine</name>
        <dbReference type="ChEBI" id="CHEBI:59789"/>
    </ligand>
</feature>
<feature type="binding site" evidence="1">
    <location>
        <begin position="133"/>
        <end position="138"/>
    </location>
    <ligand>
        <name>S-adenosyl-L-methionine</name>
        <dbReference type="ChEBI" id="CHEBI:59789"/>
    </ligand>
</feature>
<comment type="function">
    <text evidence="1">Specifically methylates guanosine-37 in various tRNAs.</text>
</comment>
<comment type="catalytic activity">
    <reaction evidence="1">
        <text>guanosine(37) in tRNA + S-adenosyl-L-methionine = N(1)-methylguanosine(37) in tRNA + S-adenosyl-L-homocysteine + H(+)</text>
        <dbReference type="Rhea" id="RHEA:36899"/>
        <dbReference type="Rhea" id="RHEA-COMP:10145"/>
        <dbReference type="Rhea" id="RHEA-COMP:10147"/>
        <dbReference type="ChEBI" id="CHEBI:15378"/>
        <dbReference type="ChEBI" id="CHEBI:57856"/>
        <dbReference type="ChEBI" id="CHEBI:59789"/>
        <dbReference type="ChEBI" id="CHEBI:73542"/>
        <dbReference type="ChEBI" id="CHEBI:74269"/>
        <dbReference type="EC" id="2.1.1.228"/>
    </reaction>
</comment>
<comment type="subunit">
    <text evidence="1">Homodimer.</text>
</comment>
<comment type="subcellular location">
    <subcellularLocation>
        <location evidence="1">Cytoplasm</location>
    </subcellularLocation>
</comment>
<comment type="similarity">
    <text evidence="1">Belongs to the RNA methyltransferase TrmD family.</text>
</comment>
<dbReference type="EC" id="2.1.1.228" evidence="1"/>
<dbReference type="EMBL" id="FM178379">
    <property type="protein sequence ID" value="CAQ78336.1"/>
    <property type="molecule type" value="Genomic_DNA"/>
</dbReference>
<dbReference type="RefSeq" id="WP_012549458.1">
    <property type="nucleotide sequence ID" value="NC_011312.1"/>
</dbReference>
<dbReference type="SMR" id="B6EGC1"/>
<dbReference type="KEGG" id="vsa:VSAL_I0651"/>
<dbReference type="eggNOG" id="COG0336">
    <property type="taxonomic scope" value="Bacteria"/>
</dbReference>
<dbReference type="HOGENOM" id="CLU_047363_0_1_6"/>
<dbReference type="Proteomes" id="UP000001730">
    <property type="component" value="Chromosome 1"/>
</dbReference>
<dbReference type="GO" id="GO:0005829">
    <property type="term" value="C:cytosol"/>
    <property type="evidence" value="ECO:0007669"/>
    <property type="project" value="TreeGrafter"/>
</dbReference>
<dbReference type="GO" id="GO:0052906">
    <property type="term" value="F:tRNA (guanine(37)-N1)-methyltransferase activity"/>
    <property type="evidence" value="ECO:0007669"/>
    <property type="project" value="UniProtKB-UniRule"/>
</dbReference>
<dbReference type="GO" id="GO:0002939">
    <property type="term" value="P:tRNA N1-guanine methylation"/>
    <property type="evidence" value="ECO:0007669"/>
    <property type="project" value="TreeGrafter"/>
</dbReference>
<dbReference type="CDD" id="cd18080">
    <property type="entry name" value="TrmD-like"/>
    <property type="match status" value="1"/>
</dbReference>
<dbReference type="FunFam" id="1.10.1270.20:FF:000001">
    <property type="entry name" value="tRNA (guanine-N(1)-)-methyltransferase"/>
    <property type="match status" value="1"/>
</dbReference>
<dbReference type="FunFam" id="3.40.1280.10:FF:000001">
    <property type="entry name" value="tRNA (guanine-N(1)-)-methyltransferase"/>
    <property type="match status" value="1"/>
</dbReference>
<dbReference type="Gene3D" id="3.40.1280.10">
    <property type="match status" value="1"/>
</dbReference>
<dbReference type="Gene3D" id="1.10.1270.20">
    <property type="entry name" value="tRNA(m1g37)methyltransferase, domain 2"/>
    <property type="match status" value="1"/>
</dbReference>
<dbReference type="HAMAP" id="MF_00605">
    <property type="entry name" value="TrmD"/>
    <property type="match status" value="1"/>
</dbReference>
<dbReference type="InterPro" id="IPR029028">
    <property type="entry name" value="Alpha/beta_knot_MTases"/>
</dbReference>
<dbReference type="InterPro" id="IPR023148">
    <property type="entry name" value="tRNA_m1G_MeTrfase_C_sf"/>
</dbReference>
<dbReference type="InterPro" id="IPR002649">
    <property type="entry name" value="tRNA_m1G_MeTrfase_TrmD"/>
</dbReference>
<dbReference type="InterPro" id="IPR029026">
    <property type="entry name" value="tRNA_m1G_MTases_N"/>
</dbReference>
<dbReference type="InterPro" id="IPR016009">
    <property type="entry name" value="tRNA_MeTrfase_TRMD/TRM10"/>
</dbReference>
<dbReference type="NCBIfam" id="NF000648">
    <property type="entry name" value="PRK00026.1"/>
    <property type="match status" value="1"/>
</dbReference>
<dbReference type="NCBIfam" id="TIGR00088">
    <property type="entry name" value="trmD"/>
    <property type="match status" value="1"/>
</dbReference>
<dbReference type="PANTHER" id="PTHR46417">
    <property type="entry name" value="TRNA (GUANINE-N(1)-)-METHYLTRANSFERASE"/>
    <property type="match status" value="1"/>
</dbReference>
<dbReference type="PANTHER" id="PTHR46417:SF1">
    <property type="entry name" value="TRNA (GUANINE-N(1)-)-METHYLTRANSFERASE"/>
    <property type="match status" value="1"/>
</dbReference>
<dbReference type="Pfam" id="PF01746">
    <property type="entry name" value="tRNA_m1G_MT"/>
    <property type="match status" value="1"/>
</dbReference>
<dbReference type="PIRSF" id="PIRSF000386">
    <property type="entry name" value="tRNA_mtase"/>
    <property type="match status" value="1"/>
</dbReference>
<dbReference type="SUPFAM" id="SSF75217">
    <property type="entry name" value="alpha/beta knot"/>
    <property type="match status" value="1"/>
</dbReference>
<proteinExistence type="inferred from homology"/>
<evidence type="ECO:0000255" key="1">
    <source>
        <dbReference type="HAMAP-Rule" id="MF_00605"/>
    </source>
</evidence>
<sequence length="249" mass="27789">MWVGVISLFPEMFRSVTDFGVTSQAIKKGLLSIETWNPRDFTQDKHRTVDDRPYGGGPGMLMMVQPLRDAITAAREAAPGKTKVIYLSPQGRTLNQAGVEELATNENLVLICGRYEGVDERIIQSEVDEEWSIGDFVLTGGELPAMTLIDSVSRFVPGVLGDFASAEEDSFADGLLDCPHYTRPEVLDGKEVPSVLKSGNHKDIARWRMKQSLGRTWLRRPELLGNLALTDEQELLLAEFVREEHQQSK</sequence>
<keyword id="KW-0963">Cytoplasm</keyword>
<keyword id="KW-0489">Methyltransferase</keyword>
<keyword id="KW-0949">S-adenosyl-L-methionine</keyword>
<keyword id="KW-0808">Transferase</keyword>
<keyword id="KW-0819">tRNA processing</keyword>
<gene>
    <name evidence="1" type="primary">trmD</name>
    <name type="ordered locus">VSAL_I0651</name>
</gene>
<organism>
    <name type="scientific">Aliivibrio salmonicida (strain LFI1238)</name>
    <name type="common">Vibrio salmonicida (strain LFI1238)</name>
    <dbReference type="NCBI Taxonomy" id="316275"/>
    <lineage>
        <taxon>Bacteria</taxon>
        <taxon>Pseudomonadati</taxon>
        <taxon>Pseudomonadota</taxon>
        <taxon>Gammaproteobacteria</taxon>
        <taxon>Vibrionales</taxon>
        <taxon>Vibrionaceae</taxon>
        <taxon>Aliivibrio</taxon>
    </lineage>
</organism>
<reference key="1">
    <citation type="journal article" date="2008" name="BMC Genomics">
        <title>The genome sequence of the fish pathogen Aliivibrio salmonicida strain LFI1238 shows extensive evidence of gene decay.</title>
        <authorList>
            <person name="Hjerde E."/>
            <person name="Lorentzen M.S."/>
            <person name="Holden M.T."/>
            <person name="Seeger K."/>
            <person name="Paulsen S."/>
            <person name="Bason N."/>
            <person name="Churcher C."/>
            <person name="Harris D."/>
            <person name="Norbertczak H."/>
            <person name="Quail M.A."/>
            <person name="Sanders S."/>
            <person name="Thurston S."/>
            <person name="Parkhill J."/>
            <person name="Willassen N.P."/>
            <person name="Thomson N.R."/>
        </authorList>
    </citation>
    <scope>NUCLEOTIDE SEQUENCE [LARGE SCALE GENOMIC DNA]</scope>
    <source>
        <strain>LFI1238</strain>
    </source>
</reference>
<protein>
    <recommendedName>
        <fullName evidence="1">tRNA (guanine-N(1)-)-methyltransferase</fullName>
        <ecNumber evidence="1">2.1.1.228</ecNumber>
    </recommendedName>
    <alternativeName>
        <fullName evidence="1">M1G-methyltransferase</fullName>
    </alternativeName>
    <alternativeName>
        <fullName evidence="1">tRNA [GM37] methyltransferase</fullName>
    </alternativeName>
</protein>
<name>TRMD_ALISL</name>